<proteinExistence type="inferred from homology"/>
<gene>
    <name evidence="1" type="primary">rpsG</name>
    <name type="ordered locus">Shal_4138</name>
</gene>
<keyword id="KW-0687">Ribonucleoprotein</keyword>
<keyword id="KW-0689">Ribosomal protein</keyword>
<keyword id="KW-0694">RNA-binding</keyword>
<keyword id="KW-0699">rRNA-binding</keyword>
<keyword id="KW-0820">tRNA-binding</keyword>
<comment type="function">
    <text evidence="1">One of the primary rRNA binding proteins, it binds directly to 16S rRNA where it nucleates assembly of the head domain of the 30S subunit. Is located at the subunit interface close to the decoding center, probably blocks exit of the E-site tRNA.</text>
</comment>
<comment type="subunit">
    <text evidence="1">Part of the 30S ribosomal subunit. Contacts proteins S9 and S11.</text>
</comment>
<comment type="similarity">
    <text evidence="1">Belongs to the universal ribosomal protein uS7 family.</text>
</comment>
<feature type="chain" id="PRO_1000081303" description="Small ribosomal subunit protein uS7">
    <location>
        <begin position="1"/>
        <end position="156"/>
    </location>
</feature>
<accession>B0TM16</accession>
<reference key="1">
    <citation type="submission" date="2008-01" db="EMBL/GenBank/DDBJ databases">
        <title>Complete sequence of Shewanella halifaxensis HAW-EB4.</title>
        <authorList>
            <consortium name="US DOE Joint Genome Institute"/>
            <person name="Copeland A."/>
            <person name="Lucas S."/>
            <person name="Lapidus A."/>
            <person name="Glavina del Rio T."/>
            <person name="Dalin E."/>
            <person name="Tice H."/>
            <person name="Bruce D."/>
            <person name="Goodwin L."/>
            <person name="Pitluck S."/>
            <person name="Sims D."/>
            <person name="Brettin T."/>
            <person name="Detter J.C."/>
            <person name="Han C."/>
            <person name="Kuske C.R."/>
            <person name="Schmutz J."/>
            <person name="Larimer F."/>
            <person name="Land M."/>
            <person name="Hauser L."/>
            <person name="Kyrpides N."/>
            <person name="Kim E."/>
            <person name="Zhao J.-S."/>
            <person name="Richardson P."/>
        </authorList>
    </citation>
    <scope>NUCLEOTIDE SEQUENCE [LARGE SCALE GENOMIC DNA]</scope>
    <source>
        <strain>HAW-EB4</strain>
    </source>
</reference>
<name>RS7_SHEHH</name>
<dbReference type="EMBL" id="CP000931">
    <property type="protein sequence ID" value="ABZ78678.1"/>
    <property type="molecule type" value="Genomic_DNA"/>
</dbReference>
<dbReference type="RefSeq" id="WP_012153455.1">
    <property type="nucleotide sequence ID" value="NC_010334.1"/>
</dbReference>
<dbReference type="SMR" id="B0TM16"/>
<dbReference type="STRING" id="458817.Shal_4138"/>
<dbReference type="KEGG" id="shl:Shal_4138"/>
<dbReference type="eggNOG" id="COG0049">
    <property type="taxonomic scope" value="Bacteria"/>
</dbReference>
<dbReference type="HOGENOM" id="CLU_072226_1_1_6"/>
<dbReference type="OrthoDB" id="9807653at2"/>
<dbReference type="Proteomes" id="UP000001317">
    <property type="component" value="Chromosome"/>
</dbReference>
<dbReference type="GO" id="GO:0015935">
    <property type="term" value="C:small ribosomal subunit"/>
    <property type="evidence" value="ECO:0007669"/>
    <property type="project" value="InterPro"/>
</dbReference>
<dbReference type="GO" id="GO:0019843">
    <property type="term" value="F:rRNA binding"/>
    <property type="evidence" value="ECO:0007669"/>
    <property type="project" value="UniProtKB-UniRule"/>
</dbReference>
<dbReference type="GO" id="GO:0003735">
    <property type="term" value="F:structural constituent of ribosome"/>
    <property type="evidence" value="ECO:0007669"/>
    <property type="project" value="InterPro"/>
</dbReference>
<dbReference type="GO" id="GO:0000049">
    <property type="term" value="F:tRNA binding"/>
    <property type="evidence" value="ECO:0007669"/>
    <property type="project" value="UniProtKB-UniRule"/>
</dbReference>
<dbReference type="GO" id="GO:0006412">
    <property type="term" value="P:translation"/>
    <property type="evidence" value="ECO:0007669"/>
    <property type="project" value="UniProtKB-UniRule"/>
</dbReference>
<dbReference type="CDD" id="cd14869">
    <property type="entry name" value="uS7_Bacteria"/>
    <property type="match status" value="1"/>
</dbReference>
<dbReference type="FunFam" id="1.10.455.10:FF:000001">
    <property type="entry name" value="30S ribosomal protein S7"/>
    <property type="match status" value="1"/>
</dbReference>
<dbReference type="Gene3D" id="1.10.455.10">
    <property type="entry name" value="Ribosomal protein S7 domain"/>
    <property type="match status" value="1"/>
</dbReference>
<dbReference type="HAMAP" id="MF_00480_B">
    <property type="entry name" value="Ribosomal_uS7_B"/>
    <property type="match status" value="1"/>
</dbReference>
<dbReference type="InterPro" id="IPR000235">
    <property type="entry name" value="Ribosomal_uS7"/>
</dbReference>
<dbReference type="InterPro" id="IPR005717">
    <property type="entry name" value="Ribosomal_uS7_bac/org-type"/>
</dbReference>
<dbReference type="InterPro" id="IPR020606">
    <property type="entry name" value="Ribosomal_uS7_CS"/>
</dbReference>
<dbReference type="InterPro" id="IPR023798">
    <property type="entry name" value="Ribosomal_uS7_dom"/>
</dbReference>
<dbReference type="InterPro" id="IPR036823">
    <property type="entry name" value="Ribosomal_uS7_dom_sf"/>
</dbReference>
<dbReference type="NCBIfam" id="TIGR01029">
    <property type="entry name" value="rpsG_bact"/>
    <property type="match status" value="1"/>
</dbReference>
<dbReference type="PANTHER" id="PTHR11205">
    <property type="entry name" value="RIBOSOMAL PROTEIN S7"/>
    <property type="match status" value="1"/>
</dbReference>
<dbReference type="Pfam" id="PF00177">
    <property type="entry name" value="Ribosomal_S7"/>
    <property type="match status" value="1"/>
</dbReference>
<dbReference type="PIRSF" id="PIRSF002122">
    <property type="entry name" value="RPS7p_RPS7a_RPS5e_RPS7o"/>
    <property type="match status" value="1"/>
</dbReference>
<dbReference type="SUPFAM" id="SSF47973">
    <property type="entry name" value="Ribosomal protein S7"/>
    <property type="match status" value="1"/>
</dbReference>
<dbReference type="PROSITE" id="PS00052">
    <property type="entry name" value="RIBOSOMAL_S7"/>
    <property type="match status" value="1"/>
</dbReference>
<organism>
    <name type="scientific">Shewanella halifaxensis (strain HAW-EB4)</name>
    <dbReference type="NCBI Taxonomy" id="458817"/>
    <lineage>
        <taxon>Bacteria</taxon>
        <taxon>Pseudomonadati</taxon>
        <taxon>Pseudomonadota</taxon>
        <taxon>Gammaproteobacteria</taxon>
        <taxon>Alteromonadales</taxon>
        <taxon>Shewanellaceae</taxon>
        <taxon>Shewanella</taxon>
    </lineage>
</organism>
<sequence>MPRRRVVGQRKILPDPKFKSELLAKFINVIMQDGKKSTAEKIIYKALDTASEKKGEDHLVILEAALDNVRPSVEVKSRRVGGSTYQVPCEVRPVRRNALAMRWLVEAARKRGEKSMALRLAGEMLDASENKGTAVKKREDVHRMAEANKAFAHYRW</sequence>
<protein>
    <recommendedName>
        <fullName evidence="1">Small ribosomal subunit protein uS7</fullName>
    </recommendedName>
    <alternativeName>
        <fullName evidence="2">30S ribosomal protein S7</fullName>
    </alternativeName>
</protein>
<evidence type="ECO:0000255" key="1">
    <source>
        <dbReference type="HAMAP-Rule" id="MF_00480"/>
    </source>
</evidence>
<evidence type="ECO:0000305" key="2"/>